<organism>
    <name type="scientific">Bordetella petrii (strain ATCC BAA-461 / DSM 12804 / CCUG 43448)</name>
    <dbReference type="NCBI Taxonomy" id="340100"/>
    <lineage>
        <taxon>Bacteria</taxon>
        <taxon>Pseudomonadati</taxon>
        <taxon>Pseudomonadota</taxon>
        <taxon>Betaproteobacteria</taxon>
        <taxon>Burkholderiales</taxon>
        <taxon>Alcaligenaceae</taxon>
        <taxon>Bordetella</taxon>
    </lineage>
</organism>
<gene>
    <name evidence="1" type="primary">ispF</name>
    <name type="ordered locus">Bpet1696</name>
</gene>
<feature type="chain" id="PRO_1000094240" description="2-C-methyl-D-erythritol 2,4-cyclodiphosphate synthase">
    <location>
        <begin position="1"/>
        <end position="162"/>
    </location>
</feature>
<feature type="binding site" evidence="1">
    <location>
        <begin position="12"/>
        <end position="14"/>
    </location>
    <ligand>
        <name>4-CDP-2-C-methyl-D-erythritol 2-phosphate</name>
        <dbReference type="ChEBI" id="CHEBI:57919"/>
    </ligand>
</feature>
<feature type="binding site" evidence="1">
    <location>
        <position position="12"/>
    </location>
    <ligand>
        <name>a divalent metal cation</name>
        <dbReference type="ChEBI" id="CHEBI:60240"/>
    </ligand>
</feature>
<feature type="binding site" evidence="1">
    <location>
        <position position="14"/>
    </location>
    <ligand>
        <name>a divalent metal cation</name>
        <dbReference type="ChEBI" id="CHEBI:60240"/>
    </ligand>
</feature>
<feature type="binding site" evidence="1">
    <location>
        <begin position="38"/>
        <end position="39"/>
    </location>
    <ligand>
        <name>4-CDP-2-C-methyl-D-erythritol 2-phosphate</name>
        <dbReference type="ChEBI" id="CHEBI:57919"/>
    </ligand>
</feature>
<feature type="binding site" evidence="1">
    <location>
        <position position="46"/>
    </location>
    <ligand>
        <name>a divalent metal cation</name>
        <dbReference type="ChEBI" id="CHEBI:60240"/>
    </ligand>
</feature>
<feature type="binding site" evidence="1">
    <location>
        <begin position="60"/>
        <end position="62"/>
    </location>
    <ligand>
        <name>4-CDP-2-C-methyl-D-erythritol 2-phosphate</name>
        <dbReference type="ChEBI" id="CHEBI:57919"/>
    </ligand>
</feature>
<feature type="binding site" evidence="1">
    <location>
        <begin position="65"/>
        <end position="69"/>
    </location>
    <ligand>
        <name>4-CDP-2-C-methyl-D-erythritol 2-phosphate</name>
        <dbReference type="ChEBI" id="CHEBI:57919"/>
    </ligand>
</feature>
<feature type="binding site" evidence="1">
    <location>
        <position position="146"/>
    </location>
    <ligand>
        <name>4-CDP-2-C-methyl-D-erythritol 2-phosphate</name>
        <dbReference type="ChEBI" id="CHEBI:57919"/>
    </ligand>
</feature>
<feature type="site" description="Transition state stabilizer" evidence="1">
    <location>
        <position position="38"/>
    </location>
</feature>
<feature type="site" description="Transition state stabilizer" evidence="1">
    <location>
        <position position="137"/>
    </location>
</feature>
<comment type="function">
    <text evidence="1">Involved in the biosynthesis of isopentenyl diphosphate (IPP) and dimethylallyl diphosphate (DMAPP), two major building blocks of isoprenoid compounds. Catalyzes the conversion of 4-diphosphocytidyl-2-C-methyl-D-erythritol 2-phosphate (CDP-ME2P) to 2-C-methyl-D-erythritol 2,4-cyclodiphosphate (ME-CPP) with a corresponding release of cytidine 5-monophosphate (CMP).</text>
</comment>
<comment type="catalytic activity">
    <reaction evidence="1">
        <text>4-CDP-2-C-methyl-D-erythritol 2-phosphate = 2-C-methyl-D-erythritol 2,4-cyclic diphosphate + CMP</text>
        <dbReference type="Rhea" id="RHEA:23864"/>
        <dbReference type="ChEBI" id="CHEBI:57919"/>
        <dbReference type="ChEBI" id="CHEBI:58483"/>
        <dbReference type="ChEBI" id="CHEBI:60377"/>
        <dbReference type="EC" id="4.6.1.12"/>
    </reaction>
</comment>
<comment type="cofactor">
    <cofactor evidence="1">
        <name>a divalent metal cation</name>
        <dbReference type="ChEBI" id="CHEBI:60240"/>
    </cofactor>
    <text evidence="1">Binds 1 divalent metal cation per subunit.</text>
</comment>
<comment type="pathway">
    <text evidence="1">Isoprenoid biosynthesis; isopentenyl diphosphate biosynthesis via DXP pathway; isopentenyl diphosphate from 1-deoxy-D-xylulose 5-phosphate: step 4/6.</text>
</comment>
<comment type="subunit">
    <text evidence="1">Homotrimer.</text>
</comment>
<comment type="similarity">
    <text evidence="1">Belongs to the IspF family.</text>
</comment>
<accession>A9II47</accession>
<reference key="1">
    <citation type="journal article" date="2008" name="BMC Genomics">
        <title>The missing link: Bordetella petrii is endowed with both the metabolic versatility of environmental bacteria and virulence traits of pathogenic Bordetellae.</title>
        <authorList>
            <person name="Gross R."/>
            <person name="Guzman C.A."/>
            <person name="Sebaihia M."/>
            <person name="Martin dos Santos V.A.P."/>
            <person name="Pieper D.H."/>
            <person name="Koebnik R."/>
            <person name="Lechner M."/>
            <person name="Bartels D."/>
            <person name="Buhrmester J."/>
            <person name="Choudhuri J.V."/>
            <person name="Ebensen T."/>
            <person name="Gaigalat L."/>
            <person name="Herrmann S."/>
            <person name="Khachane A.N."/>
            <person name="Larisch C."/>
            <person name="Link S."/>
            <person name="Linke B."/>
            <person name="Meyer F."/>
            <person name="Mormann S."/>
            <person name="Nakunst D."/>
            <person name="Rueckert C."/>
            <person name="Schneiker-Bekel S."/>
            <person name="Schulze K."/>
            <person name="Voerholter F.-J."/>
            <person name="Yevsa T."/>
            <person name="Engle J.T."/>
            <person name="Goldman W.E."/>
            <person name="Puehler A."/>
            <person name="Goebel U.B."/>
            <person name="Goesmann A."/>
            <person name="Bloecker H."/>
            <person name="Kaiser O."/>
            <person name="Martinez-Arias R."/>
        </authorList>
    </citation>
    <scope>NUCLEOTIDE SEQUENCE [LARGE SCALE GENOMIC DNA]</scope>
    <source>
        <strain>ATCC BAA-461 / DSM 12804 / CCUG 43448</strain>
    </source>
</reference>
<sequence>MNVPFRVGQGYDVHALVAGRPLIIGGVTIPHTHGLQGHSDADVLLHAVTDALLGAAGLGDIGRHFPDTDPAYRGADSRVLLRDAVAKVRAAGWAPVNIDATVHAQAPKIGPHAGAMVANIAADAGIDSASVNIKAKTNEGLGYLGRKEGIAATVVALLARAS</sequence>
<name>ISPF_BORPD</name>
<proteinExistence type="inferred from homology"/>
<dbReference type="EC" id="4.6.1.12" evidence="1"/>
<dbReference type="EMBL" id="AM902716">
    <property type="protein sequence ID" value="CAP42035.1"/>
    <property type="molecule type" value="Genomic_DNA"/>
</dbReference>
<dbReference type="SMR" id="A9II47"/>
<dbReference type="STRING" id="94624.Bpet1696"/>
<dbReference type="KEGG" id="bpt:Bpet1696"/>
<dbReference type="eggNOG" id="COG0245">
    <property type="taxonomic scope" value="Bacteria"/>
</dbReference>
<dbReference type="UniPathway" id="UPA00056">
    <property type="reaction ID" value="UER00095"/>
</dbReference>
<dbReference type="Proteomes" id="UP000001225">
    <property type="component" value="Chromosome"/>
</dbReference>
<dbReference type="GO" id="GO:0008685">
    <property type="term" value="F:2-C-methyl-D-erythritol 2,4-cyclodiphosphate synthase activity"/>
    <property type="evidence" value="ECO:0007669"/>
    <property type="project" value="UniProtKB-UniRule"/>
</dbReference>
<dbReference type="GO" id="GO:0046872">
    <property type="term" value="F:metal ion binding"/>
    <property type="evidence" value="ECO:0007669"/>
    <property type="project" value="UniProtKB-KW"/>
</dbReference>
<dbReference type="GO" id="GO:0019288">
    <property type="term" value="P:isopentenyl diphosphate biosynthetic process, methylerythritol 4-phosphate pathway"/>
    <property type="evidence" value="ECO:0007669"/>
    <property type="project" value="UniProtKB-UniRule"/>
</dbReference>
<dbReference type="GO" id="GO:0016114">
    <property type="term" value="P:terpenoid biosynthetic process"/>
    <property type="evidence" value="ECO:0007669"/>
    <property type="project" value="InterPro"/>
</dbReference>
<dbReference type="CDD" id="cd00554">
    <property type="entry name" value="MECDP_synthase"/>
    <property type="match status" value="1"/>
</dbReference>
<dbReference type="FunFam" id="3.30.1330.50:FF:000001">
    <property type="entry name" value="2-C-methyl-D-erythritol 2,4-cyclodiphosphate synthase"/>
    <property type="match status" value="1"/>
</dbReference>
<dbReference type="Gene3D" id="3.30.1330.50">
    <property type="entry name" value="2-C-methyl-D-erythritol 2,4-cyclodiphosphate synthase"/>
    <property type="match status" value="1"/>
</dbReference>
<dbReference type="HAMAP" id="MF_00107">
    <property type="entry name" value="IspF"/>
    <property type="match status" value="1"/>
</dbReference>
<dbReference type="InterPro" id="IPR003526">
    <property type="entry name" value="MECDP_synthase"/>
</dbReference>
<dbReference type="InterPro" id="IPR020555">
    <property type="entry name" value="MECDP_synthase_CS"/>
</dbReference>
<dbReference type="InterPro" id="IPR036571">
    <property type="entry name" value="MECDP_synthase_sf"/>
</dbReference>
<dbReference type="NCBIfam" id="TIGR00151">
    <property type="entry name" value="ispF"/>
    <property type="match status" value="1"/>
</dbReference>
<dbReference type="PANTHER" id="PTHR43181">
    <property type="entry name" value="2-C-METHYL-D-ERYTHRITOL 2,4-CYCLODIPHOSPHATE SYNTHASE, CHLOROPLASTIC"/>
    <property type="match status" value="1"/>
</dbReference>
<dbReference type="PANTHER" id="PTHR43181:SF1">
    <property type="entry name" value="2-C-METHYL-D-ERYTHRITOL 2,4-CYCLODIPHOSPHATE SYNTHASE, CHLOROPLASTIC"/>
    <property type="match status" value="1"/>
</dbReference>
<dbReference type="Pfam" id="PF02542">
    <property type="entry name" value="YgbB"/>
    <property type="match status" value="1"/>
</dbReference>
<dbReference type="SUPFAM" id="SSF69765">
    <property type="entry name" value="IpsF-like"/>
    <property type="match status" value="1"/>
</dbReference>
<dbReference type="PROSITE" id="PS01350">
    <property type="entry name" value="ISPF"/>
    <property type="match status" value="1"/>
</dbReference>
<protein>
    <recommendedName>
        <fullName evidence="1">2-C-methyl-D-erythritol 2,4-cyclodiphosphate synthase</fullName>
        <shortName evidence="1">MECDP-synthase</shortName>
        <shortName evidence="1">MECPP-synthase</shortName>
        <shortName evidence="1">MECPS</shortName>
        <ecNumber evidence="1">4.6.1.12</ecNumber>
    </recommendedName>
</protein>
<keyword id="KW-0414">Isoprene biosynthesis</keyword>
<keyword id="KW-0456">Lyase</keyword>
<keyword id="KW-0479">Metal-binding</keyword>
<evidence type="ECO:0000255" key="1">
    <source>
        <dbReference type="HAMAP-Rule" id="MF_00107"/>
    </source>
</evidence>